<comment type="function">
    <text evidence="1">Catalyzes the ATP-dependent conversion of 7-carboxy-7-deazaguanine (CDG) to 7-cyano-7-deazaguanine (preQ(0)).</text>
</comment>
<comment type="catalytic activity">
    <reaction evidence="1">
        <text>7-carboxy-7-deazaguanine + NH4(+) + ATP = 7-cyano-7-deazaguanine + ADP + phosphate + H2O + H(+)</text>
        <dbReference type="Rhea" id="RHEA:27982"/>
        <dbReference type="ChEBI" id="CHEBI:15377"/>
        <dbReference type="ChEBI" id="CHEBI:15378"/>
        <dbReference type="ChEBI" id="CHEBI:28938"/>
        <dbReference type="ChEBI" id="CHEBI:30616"/>
        <dbReference type="ChEBI" id="CHEBI:43474"/>
        <dbReference type="ChEBI" id="CHEBI:45075"/>
        <dbReference type="ChEBI" id="CHEBI:61036"/>
        <dbReference type="ChEBI" id="CHEBI:456216"/>
        <dbReference type="EC" id="6.3.4.20"/>
    </reaction>
</comment>
<comment type="cofactor">
    <cofactor evidence="1">
        <name>Zn(2+)</name>
        <dbReference type="ChEBI" id="CHEBI:29105"/>
    </cofactor>
    <text evidence="1">Binds 1 zinc ion per subunit.</text>
</comment>
<comment type="pathway">
    <text evidence="1">Purine metabolism; 7-cyano-7-deazaguanine biosynthesis.</text>
</comment>
<comment type="similarity">
    <text evidence="1">Belongs to the QueC family.</text>
</comment>
<organism>
    <name type="scientific">Pseudomonas syringae pv. syringae (strain B728a)</name>
    <dbReference type="NCBI Taxonomy" id="205918"/>
    <lineage>
        <taxon>Bacteria</taxon>
        <taxon>Pseudomonadati</taxon>
        <taxon>Pseudomonadota</taxon>
        <taxon>Gammaproteobacteria</taxon>
        <taxon>Pseudomonadales</taxon>
        <taxon>Pseudomonadaceae</taxon>
        <taxon>Pseudomonas</taxon>
        <taxon>Pseudomonas syringae</taxon>
    </lineage>
</organism>
<gene>
    <name evidence="1" type="primary">queC</name>
    <name type="ordered locus">Psyr_1419</name>
</gene>
<accession>Q4ZWK2</accession>
<protein>
    <recommendedName>
        <fullName evidence="1">7-cyano-7-deazaguanine synthase</fullName>
        <ecNumber evidence="1">6.3.4.20</ecNumber>
    </recommendedName>
    <alternativeName>
        <fullName evidence="1">7-cyano-7-carbaguanine synthase</fullName>
    </alternativeName>
    <alternativeName>
        <fullName evidence="1">PreQ(0) synthase</fullName>
    </alternativeName>
    <alternativeName>
        <fullName evidence="1">Queuosine biosynthesis protein QueC</fullName>
    </alternativeName>
</protein>
<proteinExistence type="inferred from homology"/>
<evidence type="ECO:0000255" key="1">
    <source>
        <dbReference type="HAMAP-Rule" id="MF_01633"/>
    </source>
</evidence>
<reference key="1">
    <citation type="journal article" date="2005" name="Proc. Natl. Acad. Sci. U.S.A.">
        <title>Comparison of the complete genome sequences of Pseudomonas syringae pv. syringae B728a and pv. tomato DC3000.</title>
        <authorList>
            <person name="Feil H."/>
            <person name="Feil W.S."/>
            <person name="Chain P."/>
            <person name="Larimer F."/>
            <person name="Dibartolo G."/>
            <person name="Copeland A."/>
            <person name="Lykidis A."/>
            <person name="Trong S."/>
            <person name="Nolan M."/>
            <person name="Goltsman E."/>
            <person name="Thiel J."/>
            <person name="Malfatti S."/>
            <person name="Loper J.E."/>
            <person name="Lapidus A."/>
            <person name="Detter J.C."/>
            <person name="Land M."/>
            <person name="Richardson P.M."/>
            <person name="Kyrpides N.C."/>
            <person name="Ivanova N."/>
            <person name="Lindow S.E."/>
        </authorList>
    </citation>
    <scope>NUCLEOTIDE SEQUENCE [LARGE SCALE GENOMIC DNA]</scope>
    <source>
        <strain>B728a</strain>
    </source>
</reference>
<sequence length="229" mass="24205">MSELTKTEKRAVILLSGGLDSATVVAMARAEGYVCYTMSFDYGQRHRAELDAAARVAGDLGAVEHKVIGLNLNGIGGSALTDSSIAVPESPSEGIPVTYVPARNTVFLSLALGWAEVLGARDIFIGVNAVDYSGYPDCRPEFVESFERMANLATKAGVEGQGFTIRAPLQNLSKSDIVKAGTALGVDYSLTVSCYQADDQGRACGKCDSCRLRAEGFTAAGIADPTRYF</sequence>
<feature type="chain" id="PRO_0000246891" description="7-cyano-7-deazaguanine synthase">
    <location>
        <begin position="1"/>
        <end position="229"/>
    </location>
</feature>
<feature type="binding site" evidence="1">
    <location>
        <begin position="15"/>
        <end position="25"/>
    </location>
    <ligand>
        <name>ATP</name>
        <dbReference type="ChEBI" id="CHEBI:30616"/>
    </ligand>
</feature>
<feature type="binding site" evidence="1">
    <location>
        <position position="194"/>
    </location>
    <ligand>
        <name>Zn(2+)</name>
        <dbReference type="ChEBI" id="CHEBI:29105"/>
    </ligand>
</feature>
<feature type="binding site" evidence="1">
    <location>
        <position position="204"/>
    </location>
    <ligand>
        <name>Zn(2+)</name>
        <dbReference type="ChEBI" id="CHEBI:29105"/>
    </ligand>
</feature>
<feature type="binding site" evidence="1">
    <location>
        <position position="207"/>
    </location>
    <ligand>
        <name>Zn(2+)</name>
        <dbReference type="ChEBI" id="CHEBI:29105"/>
    </ligand>
</feature>
<feature type="binding site" evidence="1">
    <location>
        <position position="210"/>
    </location>
    <ligand>
        <name>Zn(2+)</name>
        <dbReference type="ChEBI" id="CHEBI:29105"/>
    </ligand>
</feature>
<keyword id="KW-0067">ATP-binding</keyword>
<keyword id="KW-0436">Ligase</keyword>
<keyword id="KW-0479">Metal-binding</keyword>
<keyword id="KW-0547">Nucleotide-binding</keyword>
<keyword id="KW-0671">Queuosine biosynthesis</keyword>
<keyword id="KW-0862">Zinc</keyword>
<name>QUEC_PSEU2</name>
<dbReference type="EC" id="6.3.4.20" evidence="1"/>
<dbReference type="EMBL" id="CP000075">
    <property type="protein sequence ID" value="AAY36470.1"/>
    <property type="molecule type" value="Genomic_DNA"/>
</dbReference>
<dbReference type="RefSeq" id="WP_003390955.1">
    <property type="nucleotide sequence ID" value="NC_007005.1"/>
</dbReference>
<dbReference type="RefSeq" id="YP_234508.1">
    <property type="nucleotide sequence ID" value="NC_007005.1"/>
</dbReference>
<dbReference type="SMR" id="Q4ZWK2"/>
<dbReference type="STRING" id="205918.Psyr_1419"/>
<dbReference type="GeneID" id="77277377"/>
<dbReference type="KEGG" id="psb:Psyr_1419"/>
<dbReference type="PATRIC" id="fig|205918.7.peg.1455"/>
<dbReference type="eggNOG" id="COG0603">
    <property type="taxonomic scope" value="Bacteria"/>
</dbReference>
<dbReference type="HOGENOM" id="CLU_081854_1_1_6"/>
<dbReference type="OrthoDB" id="9789567at2"/>
<dbReference type="UniPathway" id="UPA00391"/>
<dbReference type="Proteomes" id="UP000000426">
    <property type="component" value="Chromosome"/>
</dbReference>
<dbReference type="GO" id="GO:0005524">
    <property type="term" value="F:ATP binding"/>
    <property type="evidence" value="ECO:0007669"/>
    <property type="project" value="UniProtKB-UniRule"/>
</dbReference>
<dbReference type="GO" id="GO:0016879">
    <property type="term" value="F:ligase activity, forming carbon-nitrogen bonds"/>
    <property type="evidence" value="ECO:0007669"/>
    <property type="project" value="UniProtKB-UniRule"/>
</dbReference>
<dbReference type="GO" id="GO:0008270">
    <property type="term" value="F:zinc ion binding"/>
    <property type="evidence" value="ECO:0007669"/>
    <property type="project" value="UniProtKB-UniRule"/>
</dbReference>
<dbReference type="GO" id="GO:0008616">
    <property type="term" value="P:queuosine biosynthetic process"/>
    <property type="evidence" value="ECO:0007669"/>
    <property type="project" value="UniProtKB-UniRule"/>
</dbReference>
<dbReference type="CDD" id="cd01995">
    <property type="entry name" value="QueC-like"/>
    <property type="match status" value="1"/>
</dbReference>
<dbReference type="FunFam" id="3.40.50.620:FF:000131">
    <property type="entry name" value="7-cyano-7-deazaguanine synthase"/>
    <property type="match status" value="1"/>
</dbReference>
<dbReference type="Gene3D" id="3.40.50.620">
    <property type="entry name" value="HUPs"/>
    <property type="match status" value="1"/>
</dbReference>
<dbReference type="HAMAP" id="MF_01633">
    <property type="entry name" value="QueC"/>
    <property type="match status" value="1"/>
</dbReference>
<dbReference type="InterPro" id="IPR018317">
    <property type="entry name" value="QueC"/>
</dbReference>
<dbReference type="InterPro" id="IPR014729">
    <property type="entry name" value="Rossmann-like_a/b/a_fold"/>
</dbReference>
<dbReference type="NCBIfam" id="TIGR00364">
    <property type="entry name" value="7-cyano-7-deazaguanine synthase QueC"/>
    <property type="match status" value="1"/>
</dbReference>
<dbReference type="PANTHER" id="PTHR42914">
    <property type="entry name" value="7-CYANO-7-DEAZAGUANINE SYNTHASE"/>
    <property type="match status" value="1"/>
</dbReference>
<dbReference type="PANTHER" id="PTHR42914:SF1">
    <property type="entry name" value="7-CYANO-7-DEAZAGUANINE SYNTHASE"/>
    <property type="match status" value="1"/>
</dbReference>
<dbReference type="Pfam" id="PF06508">
    <property type="entry name" value="QueC"/>
    <property type="match status" value="1"/>
</dbReference>
<dbReference type="PIRSF" id="PIRSF006293">
    <property type="entry name" value="ExsB"/>
    <property type="match status" value="1"/>
</dbReference>
<dbReference type="SUPFAM" id="SSF52402">
    <property type="entry name" value="Adenine nucleotide alpha hydrolases-like"/>
    <property type="match status" value="1"/>
</dbReference>